<sequence length="171" mass="19308">MPLLDSFAVDHTRMQAPAVRVAKTMNTPHGDAITVFDLRFCIPNKEVMPEKGIHTLEHLFAGFMRDHLNGNGVEIIDISPMGCRTGFYMSLIGTPDEQRVADAWKAAMADVLKVQDQNQIPELNVYQCGTYQMHSLSEAQDIARHILERDVRVNSNKELALPKEKLQELHI</sequence>
<comment type="function">
    <text evidence="1">Involved in the synthesis of autoinducer 2 (AI-2) which is secreted by bacteria and is used to communicate both the cell density and the metabolic potential of the environment. The regulation of gene expression in response to changes in cell density is called quorum sensing. Catalyzes the transformation of S-ribosylhomocysteine (RHC) to homocysteine (HC) and 4,5-dihydroxy-2,3-pentadione (DPD).</text>
</comment>
<comment type="catalytic activity">
    <reaction evidence="1">
        <text>S-(5-deoxy-D-ribos-5-yl)-L-homocysteine = (S)-4,5-dihydroxypentane-2,3-dione + L-homocysteine</text>
        <dbReference type="Rhea" id="RHEA:17753"/>
        <dbReference type="ChEBI" id="CHEBI:29484"/>
        <dbReference type="ChEBI" id="CHEBI:58195"/>
        <dbReference type="ChEBI" id="CHEBI:58199"/>
        <dbReference type="EC" id="4.4.1.21"/>
    </reaction>
</comment>
<comment type="cofactor">
    <cofactor evidence="1">
        <name>Fe cation</name>
        <dbReference type="ChEBI" id="CHEBI:24875"/>
    </cofactor>
    <text evidence="1">Binds 1 Fe cation per subunit.</text>
</comment>
<comment type="subunit">
    <text evidence="1">Homodimer.</text>
</comment>
<comment type="similarity">
    <text evidence="1">Belongs to the LuxS family.</text>
</comment>
<gene>
    <name evidence="1" type="primary">luxS</name>
    <name type="ordered locus">SeSA_A2966</name>
</gene>
<dbReference type="EC" id="4.4.1.21" evidence="1"/>
<dbReference type="EMBL" id="CP001127">
    <property type="protein sequence ID" value="ACF92745.1"/>
    <property type="molecule type" value="Genomic_DNA"/>
</dbReference>
<dbReference type="RefSeq" id="WP_001130194.1">
    <property type="nucleotide sequence ID" value="NC_011094.1"/>
</dbReference>
<dbReference type="SMR" id="B4TSZ9"/>
<dbReference type="KEGG" id="sew:SeSA_A2966"/>
<dbReference type="HOGENOM" id="CLU_107531_2_0_6"/>
<dbReference type="Proteomes" id="UP000001865">
    <property type="component" value="Chromosome"/>
</dbReference>
<dbReference type="GO" id="GO:0005506">
    <property type="term" value="F:iron ion binding"/>
    <property type="evidence" value="ECO:0007669"/>
    <property type="project" value="InterPro"/>
</dbReference>
<dbReference type="GO" id="GO:0043768">
    <property type="term" value="F:S-ribosylhomocysteine lyase activity"/>
    <property type="evidence" value="ECO:0007669"/>
    <property type="project" value="UniProtKB-UniRule"/>
</dbReference>
<dbReference type="GO" id="GO:0009372">
    <property type="term" value="P:quorum sensing"/>
    <property type="evidence" value="ECO:0007669"/>
    <property type="project" value="UniProtKB-UniRule"/>
</dbReference>
<dbReference type="FunFam" id="3.30.1360.80:FF:000001">
    <property type="entry name" value="S-ribosylhomocysteine lyase"/>
    <property type="match status" value="1"/>
</dbReference>
<dbReference type="Gene3D" id="3.30.1360.80">
    <property type="entry name" value="S-ribosylhomocysteinase (LuxS)"/>
    <property type="match status" value="1"/>
</dbReference>
<dbReference type="HAMAP" id="MF_00091">
    <property type="entry name" value="LuxS"/>
    <property type="match status" value="1"/>
</dbReference>
<dbReference type="InterPro" id="IPR037005">
    <property type="entry name" value="LuxS_sf"/>
</dbReference>
<dbReference type="InterPro" id="IPR011249">
    <property type="entry name" value="Metalloenz_LuxS/M16"/>
</dbReference>
<dbReference type="InterPro" id="IPR003815">
    <property type="entry name" value="S-ribosylhomocysteinase"/>
</dbReference>
<dbReference type="NCBIfam" id="NF002602">
    <property type="entry name" value="PRK02260.1-2"/>
    <property type="match status" value="1"/>
</dbReference>
<dbReference type="PANTHER" id="PTHR35799">
    <property type="entry name" value="S-RIBOSYLHOMOCYSTEINE LYASE"/>
    <property type="match status" value="1"/>
</dbReference>
<dbReference type="PANTHER" id="PTHR35799:SF1">
    <property type="entry name" value="S-RIBOSYLHOMOCYSTEINE LYASE"/>
    <property type="match status" value="1"/>
</dbReference>
<dbReference type="Pfam" id="PF02664">
    <property type="entry name" value="LuxS"/>
    <property type="match status" value="1"/>
</dbReference>
<dbReference type="PIRSF" id="PIRSF006160">
    <property type="entry name" value="AI2"/>
    <property type="match status" value="1"/>
</dbReference>
<dbReference type="PRINTS" id="PR01487">
    <property type="entry name" value="LUXSPROTEIN"/>
</dbReference>
<dbReference type="SUPFAM" id="SSF63411">
    <property type="entry name" value="LuxS/MPP-like metallohydrolase"/>
    <property type="match status" value="1"/>
</dbReference>
<evidence type="ECO:0000255" key="1">
    <source>
        <dbReference type="HAMAP-Rule" id="MF_00091"/>
    </source>
</evidence>
<keyword id="KW-0071">Autoinducer synthesis</keyword>
<keyword id="KW-0408">Iron</keyword>
<keyword id="KW-0456">Lyase</keyword>
<keyword id="KW-0479">Metal-binding</keyword>
<keyword id="KW-0673">Quorum sensing</keyword>
<name>LUXS_SALSV</name>
<feature type="chain" id="PRO_1000093327" description="S-ribosylhomocysteine lyase">
    <location>
        <begin position="1"/>
        <end position="171"/>
    </location>
</feature>
<feature type="binding site" evidence="1">
    <location>
        <position position="54"/>
    </location>
    <ligand>
        <name>Fe cation</name>
        <dbReference type="ChEBI" id="CHEBI:24875"/>
    </ligand>
</feature>
<feature type="binding site" evidence="1">
    <location>
        <position position="58"/>
    </location>
    <ligand>
        <name>Fe cation</name>
        <dbReference type="ChEBI" id="CHEBI:24875"/>
    </ligand>
</feature>
<feature type="binding site" evidence="1">
    <location>
        <position position="128"/>
    </location>
    <ligand>
        <name>Fe cation</name>
        <dbReference type="ChEBI" id="CHEBI:24875"/>
    </ligand>
</feature>
<accession>B4TSZ9</accession>
<protein>
    <recommendedName>
        <fullName evidence="1">S-ribosylhomocysteine lyase</fullName>
        <ecNumber evidence="1">4.4.1.21</ecNumber>
    </recommendedName>
    <alternativeName>
        <fullName evidence="1">AI-2 synthesis protein</fullName>
    </alternativeName>
    <alternativeName>
        <fullName evidence="1">Autoinducer-2 production protein LuxS</fullName>
    </alternativeName>
</protein>
<proteinExistence type="inferred from homology"/>
<reference key="1">
    <citation type="journal article" date="2011" name="J. Bacteriol.">
        <title>Comparative genomics of 28 Salmonella enterica isolates: evidence for CRISPR-mediated adaptive sublineage evolution.</title>
        <authorList>
            <person name="Fricke W.F."/>
            <person name="Mammel M.K."/>
            <person name="McDermott P.F."/>
            <person name="Tartera C."/>
            <person name="White D.G."/>
            <person name="Leclerc J.E."/>
            <person name="Ravel J."/>
            <person name="Cebula T.A."/>
        </authorList>
    </citation>
    <scope>NUCLEOTIDE SEQUENCE [LARGE SCALE GENOMIC DNA]</scope>
    <source>
        <strain>CVM19633</strain>
    </source>
</reference>
<organism>
    <name type="scientific">Salmonella schwarzengrund (strain CVM19633)</name>
    <dbReference type="NCBI Taxonomy" id="439843"/>
    <lineage>
        <taxon>Bacteria</taxon>
        <taxon>Pseudomonadati</taxon>
        <taxon>Pseudomonadota</taxon>
        <taxon>Gammaproteobacteria</taxon>
        <taxon>Enterobacterales</taxon>
        <taxon>Enterobacteriaceae</taxon>
        <taxon>Salmonella</taxon>
    </lineage>
</organism>